<name>SELU_HAHCH</name>
<dbReference type="EC" id="2.9.1.3" evidence="1"/>
<dbReference type="EMBL" id="CP000155">
    <property type="protein sequence ID" value="ABC27155.1"/>
    <property type="molecule type" value="Genomic_DNA"/>
</dbReference>
<dbReference type="RefSeq" id="WP_011394232.1">
    <property type="nucleotide sequence ID" value="NC_007645.1"/>
</dbReference>
<dbReference type="SMR" id="Q2SQB9"/>
<dbReference type="STRING" id="349521.HCH_00240"/>
<dbReference type="KEGG" id="hch:HCH_00240"/>
<dbReference type="eggNOG" id="COG2603">
    <property type="taxonomic scope" value="Bacteria"/>
</dbReference>
<dbReference type="HOGENOM" id="CLU_043456_1_0_6"/>
<dbReference type="OrthoDB" id="9808735at2"/>
<dbReference type="Proteomes" id="UP000000238">
    <property type="component" value="Chromosome"/>
</dbReference>
<dbReference type="GO" id="GO:0016765">
    <property type="term" value="F:transferase activity, transferring alkyl or aryl (other than methyl) groups"/>
    <property type="evidence" value="ECO:0007669"/>
    <property type="project" value="UniProtKB-UniRule"/>
</dbReference>
<dbReference type="GO" id="GO:0043828">
    <property type="term" value="F:tRNA 2-selenouridine synthase activity"/>
    <property type="evidence" value="ECO:0007669"/>
    <property type="project" value="UniProtKB-EC"/>
</dbReference>
<dbReference type="GO" id="GO:0002098">
    <property type="term" value="P:tRNA wobble uridine modification"/>
    <property type="evidence" value="ECO:0007669"/>
    <property type="project" value="UniProtKB-UniRule"/>
</dbReference>
<dbReference type="Gene3D" id="3.40.250.10">
    <property type="entry name" value="Rhodanese-like domain"/>
    <property type="match status" value="1"/>
</dbReference>
<dbReference type="HAMAP" id="MF_01622">
    <property type="entry name" value="tRNA_sel_U_synth"/>
    <property type="match status" value="1"/>
</dbReference>
<dbReference type="InterPro" id="IPR001763">
    <property type="entry name" value="Rhodanese-like_dom"/>
</dbReference>
<dbReference type="InterPro" id="IPR036873">
    <property type="entry name" value="Rhodanese-like_dom_sf"/>
</dbReference>
<dbReference type="InterPro" id="IPR017582">
    <property type="entry name" value="SelU"/>
</dbReference>
<dbReference type="NCBIfam" id="NF008751">
    <property type="entry name" value="PRK11784.1-3"/>
    <property type="match status" value="1"/>
</dbReference>
<dbReference type="NCBIfam" id="TIGR03167">
    <property type="entry name" value="tRNA_sel_U_synt"/>
    <property type="match status" value="1"/>
</dbReference>
<dbReference type="PANTHER" id="PTHR30401">
    <property type="entry name" value="TRNA 2-SELENOURIDINE SYNTHASE"/>
    <property type="match status" value="1"/>
</dbReference>
<dbReference type="PANTHER" id="PTHR30401:SF0">
    <property type="entry name" value="TRNA 2-SELENOURIDINE SYNTHASE"/>
    <property type="match status" value="1"/>
</dbReference>
<dbReference type="SMART" id="SM00450">
    <property type="entry name" value="RHOD"/>
    <property type="match status" value="1"/>
</dbReference>
<dbReference type="SUPFAM" id="SSF52821">
    <property type="entry name" value="Rhodanese/Cell cycle control phosphatase"/>
    <property type="match status" value="1"/>
</dbReference>
<dbReference type="PROSITE" id="PS50206">
    <property type="entry name" value="RHODANESE_3"/>
    <property type="match status" value="1"/>
</dbReference>
<gene>
    <name evidence="1" type="primary">selU</name>
    <name type="ordered locus">HCH_00240</name>
</gene>
<feature type="chain" id="PRO_0000292700" description="tRNA 2-selenouridine synthase">
    <location>
        <begin position="1"/>
        <end position="379"/>
    </location>
</feature>
<feature type="domain" description="Rhodanese" evidence="1">
    <location>
        <begin position="17"/>
        <end position="140"/>
    </location>
</feature>
<feature type="active site" description="S-selanylcysteine intermediate" evidence="1">
    <location>
        <position position="100"/>
    </location>
</feature>
<accession>Q2SQB9</accession>
<evidence type="ECO:0000255" key="1">
    <source>
        <dbReference type="HAMAP-Rule" id="MF_01622"/>
    </source>
</evidence>
<keyword id="KW-1185">Reference proteome</keyword>
<keyword id="KW-0711">Selenium</keyword>
<keyword id="KW-0808">Transferase</keyword>
<reference key="1">
    <citation type="journal article" date="2005" name="Nucleic Acids Res.">
        <title>Genomic blueprint of Hahella chejuensis, a marine microbe producing an algicidal agent.</title>
        <authorList>
            <person name="Jeong H."/>
            <person name="Yim J.H."/>
            <person name="Lee C."/>
            <person name="Choi S.-H."/>
            <person name="Park Y.K."/>
            <person name="Yoon S.H."/>
            <person name="Hur C.-G."/>
            <person name="Kang H.-Y."/>
            <person name="Kim D."/>
            <person name="Lee H.H."/>
            <person name="Park K.H."/>
            <person name="Park S.-H."/>
            <person name="Park H.-S."/>
            <person name="Lee H.K."/>
            <person name="Oh T.K."/>
            <person name="Kim J.F."/>
        </authorList>
    </citation>
    <scope>NUCLEOTIDE SEQUENCE [LARGE SCALE GENOMIC DNA]</scope>
    <source>
        <strain>KCTC 2396</strain>
    </source>
</reference>
<proteinExistence type="inferred from homology"/>
<protein>
    <recommendedName>
        <fullName evidence="1">tRNA 2-selenouridine synthase</fullName>
        <ecNumber evidence="1">2.9.1.3</ecNumber>
    </recommendedName>
</protein>
<organism>
    <name type="scientific">Hahella chejuensis (strain KCTC 2396)</name>
    <dbReference type="NCBI Taxonomy" id="349521"/>
    <lineage>
        <taxon>Bacteria</taxon>
        <taxon>Pseudomonadati</taxon>
        <taxon>Pseudomonadota</taxon>
        <taxon>Gammaproteobacteria</taxon>
        <taxon>Oceanospirillales</taxon>
        <taxon>Hahellaceae</taxon>
        <taxon>Hahella</taxon>
    </lineage>
</organism>
<sequence>MKAFGDGQDTEDYLNLFLSGAPLLDTRAPVEFHKGAFPGAVNLPLMTDDERAQVGRCYKRHGQQAAIELGHRLAHGAVKESRVQGWREFAQRHPQGYLYCFRGGLRSSICQQWLAESGVAYPRVLGGYKAMRRFLIESLESICQEARLVLLAGHTGGGKTDLLARIPGAVDLERLAHHRGSAFGRRADGQPSQIDFENALAVALLRQRHGFANAPLLLEDESHLIGRCALPQSLRRAMAQAPLVVVEVALEQRVEHSFRNYILHKLDEWRRRQGEDEGFERFADDLRQSMYNIRTRLGGLRYQQLSEMLEAALARHRQGDPAYHRDWIRCLLEDYYDPMYAYQLQKRAERICFRGDAAAVRDYFAHSSSTTATVRDKRL</sequence>
<comment type="function">
    <text evidence="1">Involved in the post-transcriptional modification of the uridine at the wobble position (U34) of tRNA(Lys), tRNA(Glu) and tRNA(Gln). Catalyzes the conversion of 2-thiouridine (S2U-RNA) to 2-selenouridine (Se2U-RNA). Acts in a two-step process involving geranylation of 2-thiouridine (S2U) to S-geranyl-2-thiouridine (geS2U) and subsequent selenation of the latter derivative to 2-selenouridine (Se2U) in the tRNA chain.</text>
</comment>
<comment type="catalytic activity">
    <reaction evidence="1">
        <text>5-methylaminomethyl-2-thiouridine(34) in tRNA + selenophosphate + (2E)-geranyl diphosphate + H2O + H(+) = 5-methylaminomethyl-2-selenouridine(34) in tRNA + (2E)-thiogeraniol + phosphate + diphosphate</text>
        <dbReference type="Rhea" id="RHEA:42716"/>
        <dbReference type="Rhea" id="RHEA-COMP:10195"/>
        <dbReference type="Rhea" id="RHEA-COMP:10196"/>
        <dbReference type="ChEBI" id="CHEBI:15377"/>
        <dbReference type="ChEBI" id="CHEBI:15378"/>
        <dbReference type="ChEBI" id="CHEBI:16144"/>
        <dbReference type="ChEBI" id="CHEBI:33019"/>
        <dbReference type="ChEBI" id="CHEBI:43474"/>
        <dbReference type="ChEBI" id="CHEBI:58057"/>
        <dbReference type="ChEBI" id="CHEBI:74455"/>
        <dbReference type="ChEBI" id="CHEBI:82743"/>
        <dbReference type="ChEBI" id="CHEBI:143703"/>
        <dbReference type="EC" id="2.9.1.3"/>
    </reaction>
    <physiologicalReaction direction="left-to-right" evidence="1">
        <dbReference type="Rhea" id="RHEA:42717"/>
    </physiologicalReaction>
</comment>
<comment type="catalytic activity">
    <reaction evidence="1">
        <text>5-methylaminomethyl-2-thiouridine(34) in tRNA + (2E)-geranyl diphosphate = 5-methylaminomethyl-S-(2E)-geranyl-thiouridine(34) in tRNA + diphosphate</text>
        <dbReference type="Rhea" id="RHEA:14085"/>
        <dbReference type="Rhea" id="RHEA-COMP:10195"/>
        <dbReference type="Rhea" id="RHEA-COMP:14654"/>
        <dbReference type="ChEBI" id="CHEBI:33019"/>
        <dbReference type="ChEBI" id="CHEBI:58057"/>
        <dbReference type="ChEBI" id="CHEBI:74455"/>
        <dbReference type="ChEBI" id="CHEBI:140632"/>
    </reaction>
    <physiologicalReaction direction="left-to-right" evidence="1">
        <dbReference type="Rhea" id="RHEA:14086"/>
    </physiologicalReaction>
</comment>
<comment type="catalytic activity">
    <reaction evidence="1">
        <text>5-methylaminomethyl-S-(2E)-geranyl-thiouridine(34) in tRNA + selenophosphate + H(+) = 5-methylaminomethyl-2-(Se-phospho)selenouridine(34) in tRNA + (2E)-thiogeraniol</text>
        <dbReference type="Rhea" id="RHEA:60172"/>
        <dbReference type="Rhea" id="RHEA-COMP:14654"/>
        <dbReference type="Rhea" id="RHEA-COMP:15523"/>
        <dbReference type="ChEBI" id="CHEBI:15378"/>
        <dbReference type="ChEBI" id="CHEBI:16144"/>
        <dbReference type="ChEBI" id="CHEBI:140632"/>
        <dbReference type="ChEBI" id="CHEBI:143702"/>
        <dbReference type="ChEBI" id="CHEBI:143703"/>
    </reaction>
    <physiologicalReaction direction="left-to-right" evidence="1">
        <dbReference type="Rhea" id="RHEA:60173"/>
    </physiologicalReaction>
</comment>
<comment type="catalytic activity">
    <reaction evidence="1">
        <text>5-methylaminomethyl-2-(Se-phospho)selenouridine(34) in tRNA + H2O = 5-methylaminomethyl-2-selenouridine(34) in tRNA + phosphate</text>
        <dbReference type="Rhea" id="RHEA:60176"/>
        <dbReference type="Rhea" id="RHEA-COMP:10196"/>
        <dbReference type="Rhea" id="RHEA-COMP:15523"/>
        <dbReference type="ChEBI" id="CHEBI:15377"/>
        <dbReference type="ChEBI" id="CHEBI:43474"/>
        <dbReference type="ChEBI" id="CHEBI:82743"/>
        <dbReference type="ChEBI" id="CHEBI:143702"/>
    </reaction>
    <physiologicalReaction direction="left-to-right" evidence="1">
        <dbReference type="Rhea" id="RHEA:60177"/>
    </physiologicalReaction>
</comment>
<comment type="subunit">
    <text evidence="1">Monomer.</text>
</comment>
<comment type="similarity">
    <text evidence="1">Belongs to the SelU family.</text>
</comment>